<accession>Q31E41</accession>
<name>PDXH2_HYDCU</name>
<comment type="function">
    <text evidence="1">Catalyzes the oxidation of either pyridoxine 5'-phosphate (PNP) or pyridoxamine 5'-phosphate (PMP) into pyridoxal 5'-phosphate (PLP).</text>
</comment>
<comment type="catalytic activity">
    <reaction evidence="1">
        <text>pyridoxamine 5'-phosphate + O2 + H2O = pyridoxal 5'-phosphate + H2O2 + NH4(+)</text>
        <dbReference type="Rhea" id="RHEA:15817"/>
        <dbReference type="ChEBI" id="CHEBI:15377"/>
        <dbReference type="ChEBI" id="CHEBI:15379"/>
        <dbReference type="ChEBI" id="CHEBI:16240"/>
        <dbReference type="ChEBI" id="CHEBI:28938"/>
        <dbReference type="ChEBI" id="CHEBI:58451"/>
        <dbReference type="ChEBI" id="CHEBI:597326"/>
        <dbReference type="EC" id="1.4.3.5"/>
    </reaction>
</comment>
<comment type="catalytic activity">
    <reaction evidence="1">
        <text>pyridoxine 5'-phosphate + O2 = pyridoxal 5'-phosphate + H2O2</text>
        <dbReference type="Rhea" id="RHEA:15149"/>
        <dbReference type="ChEBI" id="CHEBI:15379"/>
        <dbReference type="ChEBI" id="CHEBI:16240"/>
        <dbReference type="ChEBI" id="CHEBI:58589"/>
        <dbReference type="ChEBI" id="CHEBI:597326"/>
        <dbReference type="EC" id="1.4.3.5"/>
    </reaction>
</comment>
<comment type="cofactor">
    <cofactor evidence="1">
        <name>FMN</name>
        <dbReference type="ChEBI" id="CHEBI:58210"/>
    </cofactor>
    <text evidence="1">Binds 1 FMN per subunit.</text>
</comment>
<comment type="pathway">
    <text evidence="1">Cofactor metabolism; pyridoxal 5'-phosphate salvage; pyridoxal 5'-phosphate from pyridoxamine 5'-phosphate: step 1/1.</text>
</comment>
<comment type="pathway">
    <text evidence="1">Cofactor metabolism; pyridoxal 5'-phosphate salvage; pyridoxal 5'-phosphate from pyridoxine 5'-phosphate: step 1/1.</text>
</comment>
<comment type="subunit">
    <text evidence="1">Homodimer.</text>
</comment>
<comment type="similarity">
    <text evidence="1">Belongs to the pyridoxamine 5'-phosphate oxidase family.</text>
</comment>
<organism>
    <name type="scientific">Hydrogenovibrio crunogenus (strain DSM 25203 / XCL-2)</name>
    <name type="common">Thiomicrospira crunogena</name>
    <dbReference type="NCBI Taxonomy" id="317025"/>
    <lineage>
        <taxon>Bacteria</taxon>
        <taxon>Pseudomonadati</taxon>
        <taxon>Pseudomonadota</taxon>
        <taxon>Gammaproteobacteria</taxon>
        <taxon>Thiotrichales</taxon>
        <taxon>Piscirickettsiaceae</taxon>
        <taxon>Hydrogenovibrio</taxon>
    </lineage>
</organism>
<sequence>MTLNLADLRQRYLKDGLDENNTDDNPFVQFEKWFHQAQKSELLEPNAMVLSTVNEVNQPSTRTVLLKQFSDDGFVFFTNYRSQKAKDIQHNPKVALHFNWLELERQVKIQGVAAKISLKDSMRYFATRPKGSQIGAWVSHQSEVISSKQLLLSQFEKMKQKFQSGEIPFPDFWGGYMVVPQQIEFWQGGDNRLHDRICYTLKDNQWVKQRLAP</sequence>
<dbReference type="EC" id="1.4.3.5" evidence="1"/>
<dbReference type="EMBL" id="CP000109">
    <property type="protein sequence ID" value="ABB42582.1"/>
    <property type="molecule type" value="Genomic_DNA"/>
</dbReference>
<dbReference type="SMR" id="Q31E41"/>
<dbReference type="STRING" id="317025.Tcr_1992"/>
<dbReference type="KEGG" id="tcx:Tcr_1992"/>
<dbReference type="eggNOG" id="COG0259">
    <property type="taxonomic scope" value="Bacteria"/>
</dbReference>
<dbReference type="HOGENOM" id="CLU_032263_2_2_6"/>
<dbReference type="UniPathway" id="UPA01068">
    <property type="reaction ID" value="UER00304"/>
</dbReference>
<dbReference type="UniPathway" id="UPA01068">
    <property type="reaction ID" value="UER00305"/>
</dbReference>
<dbReference type="GO" id="GO:0010181">
    <property type="term" value="F:FMN binding"/>
    <property type="evidence" value="ECO:0007669"/>
    <property type="project" value="UniProtKB-UniRule"/>
</dbReference>
<dbReference type="GO" id="GO:0004733">
    <property type="term" value="F:pyridoxamine phosphate oxidase activity"/>
    <property type="evidence" value="ECO:0007669"/>
    <property type="project" value="UniProtKB-UniRule"/>
</dbReference>
<dbReference type="GO" id="GO:0008615">
    <property type="term" value="P:pyridoxine biosynthetic process"/>
    <property type="evidence" value="ECO:0007669"/>
    <property type="project" value="UniProtKB-KW"/>
</dbReference>
<dbReference type="FunFam" id="2.30.110.10:FF:000020">
    <property type="entry name" value="PNPO isoform 11"/>
    <property type="match status" value="1"/>
</dbReference>
<dbReference type="Gene3D" id="2.30.110.10">
    <property type="entry name" value="Electron Transport, Fmn-binding Protein, Chain A"/>
    <property type="match status" value="1"/>
</dbReference>
<dbReference type="HAMAP" id="MF_01629">
    <property type="entry name" value="PdxH"/>
    <property type="match status" value="1"/>
</dbReference>
<dbReference type="InterPro" id="IPR000659">
    <property type="entry name" value="Pyridox_Oxase"/>
</dbReference>
<dbReference type="InterPro" id="IPR019740">
    <property type="entry name" value="Pyridox_Oxase_CS"/>
</dbReference>
<dbReference type="InterPro" id="IPR011576">
    <property type="entry name" value="Pyridox_Oxase_N"/>
</dbReference>
<dbReference type="InterPro" id="IPR019576">
    <property type="entry name" value="Pyridoxamine_oxidase_dimer_C"/>
</dbReference>
<dbReference type="InterPro" id="IPR012349">
    <property type="entry name" value="Split_barrel_FMN-bd"/>
</dbReference>
<dbReference type="NCBIfam" id="TIGR00558">
    <property type="entry name" value="pdxH"/>
    <property type="match status" value="1"/>
</dbReference>
<dbReference type="NCBIfam" id="NF004231">
    <property type="entry name" value="PRK05679.1"/>
    <property type="match status" value="1"/>
</dbReference>
<dbReference type="PANTHER" id="PTHR10851:SF0">
    <property type="entry name" value="PYRIDOXINE-5'-PHOSPHATE OXIDASE"/>
    <property type="match status" value="1"/>
</dbReference>
<dbReference type="PANTHER" id="PTHR10851">
    <property type="entry name" value="PYRIDOXINE-5-PHOSPHATE OXIDASE"/>
    <property type="match status" value="1"/>
</dbReference>
<dbReference type="Pfam" id="PF10590">
    <property type="entry name" value="PNP_phzG_C"/>
    <property type="match status" value="1"/>
</dbReference>
<dbReference type="Pfam" id="PF01243">
    <property type="entry name" value="PNPOx_N"/>
    <property type="match status" value="1"/>
</dbReference>
<dbReference type="PIRSF" id="PIRSF000190">
    <property type="entry name" value="Pyd_amn-ph_oxd"/>
    <property type="match status" value="1"/>
</dbReference>
<dbReference type="SUPFAM" id="SSF50475">
    <property type="entry name" value="FMN-binding split barrel"/>
    <property type="match status" value="1"/>
</dbReference>
<dbReference type="PROSITE" id="PS01064">
    <property type="entry name" value="PYRIDOX_OXIDASE"/>
    <property type="match status" value="1"/>
</dbReference>
<reference key="1">
    <citation type="journal article" date="2006" name="PLoS Biol.">
        <title>The genome of deep-sea vent chemolithoautotroph Thiomicrospira crunogena XCL-2.</title>
        <authorList>
            <person name="Scott K.M."/>
            <person name="Sievert S.M."/>
            <person name="Abril F.N."/>
            <person name="Ball L.A."/>
            <person name="Barrett C.J."/>
            <person name="Blake R.A."/>
            <person name="Boller A.J."/>
            <person name="Chain P.S.G."/>
            <person name="Clark J.A."/>
            <person name="Davis C.R."/>
            <person name="Detter C."/>
            <person name="Do K.F."/>
            <person name="Dobrinski K.P."/>
            <person name="Faza B.I."/>
            <person name="Fitzpatrick K.A."/>
            <person name="Freyermuth S.K."/>
            <person name="Harmer T.L."/>
            <person name="Hauser L.J."/>
            <person name="Huegler M."/>
            <person name="Kerfeld C.A."/>
            <person name="Klotz M.G."/>
            <person name="Kong W.W."/>
            <person name="Land M."/>
            <person name="Lapidus A."/>
            <person name="Larimer F.W."/>
            <person name="Longo D.L."/>
            <person name="Lucas S."/>
            <person name="Malfatti S.A."/>
            <person name="Massey S.E."/>
            <person name="Martin D.D."/>
            <person name="McCuddin Z."/>
            <person name="Meyer F."/>
            <person name="Moore J.L."/>
            <person name="Ocampo L.H. Jr."/>
            <person name="Paul J.H."/>
            <person name="Paulsen I.T."/>
            <person name="Reep D.K."/>
            <person name="Ren Q."/>
            <person name="Ross R.L."/>
            <person name="Sato P.Y."/>
            <person name="Thomas P."/>
            <person name="Tinkham L.E."/>
            <person name="Zeruth G.T."/>
        </authorList>
    </citation>
    <scope>NUCLEOTIDE SEQUENCE [LARGE SCALE GENOMIC DNA]</scope>
    <source>
        <strain>DSM 25203 / XCL-2</strain>
    </source>
</reference>
<keyword id="KW-0285">Flavoprotein</keyword>
<keyword id="KW-0288">FMN</keyword>
<keyword id="KW-0560">Oxidoreductase</keyword>
<keyword id="KW-0664">Pyridoxine biosynthesis</keyword>
<protein>
    <recommendedName>
        <fullName evidence="1">Pyridoxine/pyridoxamine 5'-phosphate oxidase 2</fullName>
        <ecNumber evidence="1">1.4.3.5</ecNumber>
    </recommendedName>
    <alternativeName>
        <fullName evidence="1">PNP/PMP oxidase 2</fullName>
        <shortName evidence="1">PNPOx 2</shortName>
    </alternativeName>
    <alternativeName>
        <fullName evidence="1">Pyridoxal 5'-phosphate synthase 2</fullName>
    </alternativeName>
</protein>
<proteinExistence type="inferred from homology"/>
<feature type="chain" id="PRO_0000255895" description="Pyridoxine/pyridoxamine 5'-phosphate oxidase 2">
    <location>
        <begin position="1"/>
        <end position="213"/>
    </location>
</feature>
<feature type="binding site" evidence="1">
    <location>
        <begin position="9"/>
        <end position="12"/>
    </location>
    <ligand>
        <name>substrate</name>
    </ligand>
</feature>
<feature type="binding site" evidence="1">
    <location>
        <begin position="62"/>
        <end position="67"/>
    </location>
    <ligand>
        <name>FMN</name>
        <dbReference type="ChEBI" id="CHEBI:58210"/>
    </ligand>
</feature>
<feature type="binding site" evidence="1">
    <location>
        <position position="67"/>
    </location>
    <ligand>
        <name>substrate</name>
    </ligand>
</feature>
<feature type="binding site" evidence="1">
    <location>
        <begin position="77"/>
        <end position="78"/>
    </location>
    <ligand>
        <name>FMN</name>
        <dbReference type="ChEBI" id="CHEBI:58210"/>
    </ligand>
</feature>
<feature type="binding site" evidence="1">
    <location>
        <position position="84"/>
    </location>
    <ligand>
        <name>FMN</name>
        <dbReference type="ChEBI" id="CHEBI:58210"/>
    </ligand>
</feature>
<feature type="binding site" evidence="1">
    <location>
        <position position="106"/>
    </location>
    <ligand>
        <name>FMN</name>
        <dbReference type="ChEBI" id="CHEBI:58210"/>
    </ligand>
</feature>
<feature type="binding site" evidence="1">
    <location>
        <position position="124"/>
    </location>
    <ligand>
        <name>substrate</name>
    </ligand>
</feature>
<feature type="binding site" evidence="1">
    <location>
        <position position="128"/>
    </location>
    <ligand>
        <name>substrate</name>
    </ligand>
</feature>
<feature type="binding site" evidence="1">
    <location>
        <position position="132"/>
    </location>
    <ligand>
        <name>substrate</name>
    </ligand>
</feature>
<feature type="binding site" evidence="1">
    <location>
        <begin position="141"/>
        <end position="142"/>
    </location>
    <ligand>
        <name>FMN</name>
        <dbReference type="ChEBI" id="CHEBI:58210"/>
    </ligand>
</feature>
<feature type="binding site" evidence="1">
    <location>
        <position position="186"/>
    </location>
    <ligand>
        <name>FMN</name>
        <dbReference type="ChEBI" id="CHEBI:58210"/>
    </ligand>
</feature>
<feature type="binding site" evidence="1">
    <location>
        <begin position="192"/>
        <end position="194"/>
    </location>
    <ligand>
        <name>substrate</name>
    </ligand>
</feature>
<feature type="binding site" evidence="1">
    <location>
        <position position="196"/>
    </location>
    <ligand>
        <name>FMN</name>
        <dbReference type="ChEBI" id="CHEBI:58210"/>
    </ligand>
</feature>
<gene>
    <name evidence="1" type="primary">pdxH2</name>
    <name type="ordered locus">Tcr_1992</name>
</gene>
<evidence type="ECO:0000255" key="1">
    <source>
        <dbReference type="HAMAP-Rule" id="MF_01629"/>
    </source>
</evidence>